<accession>Q86I92</accession>
<accession>Q55AG1</accession>
<feature type="chain" id="PRO_0000348162" description="Putative uncharacterized protein DDB_G0271918">
    <location>
        <begin position="1"/>
        <end position="64"/>
    </location>
</feature>
<sequence>MTIIKSISIIADKSISKTNFIKINNENDSIVIMYTNNQKISKSRGQILDSHIVVNPLIDFNLIF</sequence>
<proteinExistence type="predicted"/>
<reference key="1">
    <citation type="journal article" date="2002" name="Nature">
        <title>Sequence and analysis of chromosome 2 of Dictyostelium discoideum.</title>
        <authorList>
            <person name="Gloeckner G."/>
            <person name="Eichinger L."/>
            <person name="Szafranski K."/>
            <person name="Pachebat J.A."/>
            <person name="Bankier A.T."/>
            <person name="Dear P.H."/>
            <person name="Lehmann R."/>
            <person name="Baumgart C."/>
            <person name="Parra G."/>
            <person name="Abril J.F."/>
            <person name="Guigo R."/>
            <person name="Kumpf K."/>
            <person name="Tunggal B."/>
            <person name="Cox E.C."/>
            <person name="Quail M.A."/>
            <person name="Platzer M."/>
            <person name="Rosenthal A."/>
            <person name="Noegel A.A."/>
        </authorList>
    </citation>
    <scope>NUCLEOTIDE SEQUENCE [LARGE SCALE GENOMIC DNA]</scope>
    <source>
        <strain>AX4</strain>
    </source>
</reference>
<reference key="2">
    <citation type="journal article" date="2005" name="Nature">
        <title>The genome of the social amoeba Dictyostelium discoideum.</title>
        <authorList>
            <person name="Eichinger L."/>
            <person name="Pachebat J.A."/>
            <person name="Gloeckner G."/>
            <person name="Rajandream M.A."/>
            <person name="Sucgang R."/>
            <person name="Berriman M."/>
            <person name="Song J."/>
            <person name="Olsen R."/>
            <person name="Szafranski K."/>
            <person name="Xu Q."/>
            <person name="Tunggal B."/>
            <person name="Kummerfeld S."/>
            <person name="Madera M."/>
            <person name="Konfortov B.A."/>
            <person name="Rivero F."/>
            <person name="Bankier A.T."/>
            <person name="Lehmann R."/>
            <person name="Hamlin N."/>
            <person name="Davies R."/>
            <person name="Gaudet P."/>
            <person name="Fey P."/>
            <person name="Pilcher K."/>
            <person name="Chen G."/>
            <person name="Saunders D."/>
            <person name="Sodergren E.J."/>
            <person name="Davis P."/>
            <person name="Kerhornou A."/>
            <person name="Nie X."/>
            <person name="Hall N."/>
            <person name="Anjard C."/>
            <person name="Hemphill L."/>
            <person name="Bason N."/>
            <person name="Farbrother P."/>
            <person name="Desany B."/>
            <person name="Just E."/>
            <person name="Morio T."/>
            <person name="Rost R."/>
            <person name="Churcher C.M."/>
            <person name="Cooper J."/>
            <person name="Haydock S."/>
            <person name="van Driessche N."/>
            <person name="Cronin A."/>
            <person name="Goodhead I."/>
            <person name="Muzny D.M."/>
            <person name="Mourier T."/>
            <person name="Pain A."/>
            <person name="Lu M."/>
            <person name="Harper D."/>
            <person name="Lindsay R."/>
            <person name="Hauser H."/>
            <person name="James K.D."/>
            <person name="Quiles M."/>
            <person name="Madan Babu M."/>
            <person name="Saito T."/>
            <person name="Buchrieser C."/>
            <person name="Wardroper A."/>
            <person name="Felder M."/>
            <person name="Thangavelu M."/>
            <person name="Johnson D."/>
            <person name="Knights A."/>
            <person name="Loulseged H."/>
            <person name="Mungall K.L."/>
            <person name="Oliver K."/>
            <person name="Price C."/>
            <person name="Quail M.A."/>
            <person name="Urushihara H."/>
            <person name="Hernandez J."/>
            <person name="Rabbinowitsch E."/>
            <person name="Steffen D."/>
            <person name="Sanders M."/>
            <person name="Ma J."/>
            <person name="Kohara Y."/>
            <person name="Sharp S."/>
            <person name="Simmonds M.N."/>
            <person name="Spiegler S."/>
            <person name="Tivey A."/>
            <person name="Sugano S."/>
            <person name="White B."/>
            <person name="Walker D."/>
            <person name="Woodward J.R."/>
            <person name="Winckler T."/>
            <person name="Tanaka Y."/>
            <person name="Shaulsky G."/>
            <person name="Schleicher M."/>
            <person name="Weinstock G.M."/>
            <person name="Rosenthal A."/>
            <person name="Cox E.C."/>
            <person name="Chisholm R.L."/>
            <person name="Gibbs R.A."/>
            <person name="Loomis W.F."/>
            <person name="Platzer M."/>
            <person name="Kay R.R."/>
            <person name="Williams J.G."/>
            <person name="Dear P.H."/>
            <person name="Noegel A.A."/>
            <person name="Barrell B.G."/>
            <person name="Kuspa A."/>
        </authorList>
    </citation>
    <scope>NUCLEOTIDE SEQUENCE [LARGE SCALE GENOMIC DNA]</scope>
    <source>
        <strain>AX4</strain>
    </source>
</reference>
<keyword id="KW-1185">Reference proteome</keyword>
<protein>
    <recommendedName>
        <fullName>Putative uncharacterized protein DDB_G0271918</fullName>
    </recommendedName>
</protein>
<dbReference type="EMBL" id="AAFI02000007">
    <property type="protein sequence ID" value="EAL71483.1"/>
    <property type="molecule type" value="Genomic_DNA"/>
</dbReference>
<dbReference type="RefSeq" id="XP_645411.1">
    <property type="nucleotide sequence ID" value="XM_640319.1"/>
</dbReference>
<dbReference type="PaxDb" id="44689-DDB0168558"/>
<dbReference type="EnsemblProtists" id="EAL71483">
    <property type="protein sequence ID" value="EAL71483"/>
    <property type="gene ID" value="DDB_G0271918"/>
</dbReference>
<dbReference type="GeneID" id="8618209"/>
<dbReference type="KEGG" id="ddi:DDB_G0271918"/>
<dbReference type="dictyBase" id="DDB_G0271918"/>
<dbReference type="VEuPathDB" id="AmoebaDB:DDB_G0271918"/>
<dbReference type="HOGENOM" id="CLU_2872315_0_0_1"/>
<dbReference type="InParanoid" id="Q86I92"/>
<dbReference type="PRO" id="PR:Q86I92"/>
<dbReference type="Proteomes" id="UP000002195">
    <property type="component" value="Chromosome 2"/>
</dbReference>
<gene>
    <name type="ORF">DDB_G0271918</name>
</gene>
<organism>
    <name type="scientific">Dictyostelium discoideum</name>
    <name type="common">Social amoeba</name>
    <dbReference type="NCBI Taxonomy" id="44689"/>
    <lineage>
        <taxon>Eukaryota</taxon>
        <taxon>Amoebozoa</taxon>
        <taxon>Evosea</taxon>
        <taxon>Eumycetozoa</taxon>
        <taxon>Dictyostelia</taxon>
        <taxon>Dictyosteliales</taxon>
        <taxon>Dictyosteliaceae</taxon>
        <taxon>Dictyostelium</taxon>
    </lineage>
</organism>
<name>Y8558_DICDI</name>